<proteinExistence type="evidence at protein level"/>
<comment type="function">
    <text evidence="1 4 7">Endosomal receptor that plays a key role in innate and adaptive immunity. Controls host immune response against pathogens through recognition of uridine-containing single strand RNAs (ssRNAs) of viral origin or guanosine analogs (PubMed:21402738). Upon binding to agonists, undergoes dimerization that brings TIR domains from the two molecules into direct contact, leading to the recruitment of TIR-containing downstream adapter MYD88 through homotypic interaction. In turn, the Myddosome signaling complex is formed involving IRAK4, IRAK1, TRAF6, TRAF3 leading to activation of downstream transcription factors NF-kappa-B and IRF7 to induce pro-inflammatory cytokines and interferons, respectively (By similarity) (PubMed:14976261). In plasmacytoid dendritic cells, RNASET2 endonuclease cooperates with PLD3 or PLD4 5'-&gt;3' exonucleases to process RNA and release 2',3'-cyclic guanosine monophosphate (2',3'-cGMP) and cytidine-rich RNA fragments that occupy TLR7 ligand-binding pockets and trigger a signaling-competent state.</text>
</comment>
<comment type="activity regulation">
    <text evidence="1">Activated by guanosine analogs including deoxyguanosine, 7-thia-8-oxoguanosine or 7-deazaguanosine in a RNA-independent manner.</text>
</comment>
<comment type="subunit">
    <text evidence="1 5 8 10">Homodimer (By similarity). Interacts with MYD88 via their respective TIR domains (Probable). Interacts with UNC93B1 (PubMed:17452530). Interacts with SMPDL3B (PubMed:26095358).</text>
</comment>
<comment type="subcellular location">
    <subcellularLocation>
        <location evidence="6">Endosome membrane</location>
    </subcellularLocation>
    <subcellularLocation>
        <location evidence="6">Endoplasmic reticulum membrane</location>
        <topology evidence="6">Single-pass type I membrane protein</topology>
    </subcellularLocation>
    <subcellularLocation>
        <location evidence="6">Lysosome</location>
    </subcellularLocation>
    <subcellularLocation>
        <location evidence="6">Cytoplasmic vesicle</location>
        <location evidence="6">Phagosome</location>
    </subcellularLocation>
    <text>Relocalizes from endoplasmic reticulum to endosome and lysosome upon stimulation with agonist.</text>
</comment>
<comment type="domain">
    <text evidence="1">Contains two binding domains, first site for small ligands and second site for ssRNA.</text>
</comment>
<comment type="PTM">
    <text evidence="7">The first cleavage is performed by asparagine endopeptidase or cathepsin family members. This initial cleavage event is followed by a trimming event that is solely cathepsin mediated and required for optimal receptor signaling.</text>
</comment>
<comment type="similarity">
    <text evidence="10">Belongs to the Toll-like receptor family.</text>
</comment>
<evidence type="ECO:0000250" key="1">
    <source>
        <dbReference type="UniProtKB" id="Q9NYK1"/>
    </source>
</evidence>
<evidence type="ECO:0000255" key="2"/>
<evidence type="ECO:0000255" key="3">
    <source>
        <dbReference type="PROSITE-ProRule" id="PRU00204"/>
    </source>
</evidence>
<evidence type="ECO:0000269" key="4">
    <source>
    </source>
</evidence>
<evidence type="ECO:0000269" key="5">
    <source>
    </source>
</evidence>
<evidence type="ECO:0000269" key="6">
    <source>
    </source>
</evidence>
<evidence type="ECO:0000269" key="7">
    <source>
    </source>
</evidence>
<evidence type="ECO:0000269" key="8">
    <source>
    </source>
</evidence>
<evidence type="ECO:0000269" key="9">
    <source>
    </source>
</evidence>
<evidence type="ECO:0000305" key="10"/>
<feature type="signal peptide" evidence="2">
    <location>
        <begin position="1"/>
        <end position="26"/>
    </location>
</feature>
<feature type="chain" id="PRO_0000034734" description="Toll-like receptor 7">
    <location>
        <begin position="27"/>
        <end position="1050"/>
    </location>
</feature>
<feature type="topological domain" description="Extracellular" evidence="2">
    <location>
        <begin position="27"/>
        <end position="837"/>
    </location>
</feature>
<feature type="transmembrane region" description="Helical" evidence="2">
    <location>
        <begin position="838"/>
        <end position="858"/>
    </location>
</feature>
<feature type="topological domain" description="Cytoplasmic" evidence="2">
    <location>
        <begin position="859"/>
        <end position="1050"/>
    </location>
</feature>
<feature type="repeat" description="LRR 1">
    <location>
        <begin position="42"/>
        <end position="64"/>
    </location>
</feature>
<feature type="repeat" description="LRR 2">
    <location>
        <begin position="65"/>
        <end position="87"/>
    </location>
</feature>
<feature type="repeat" description="LRR 3">
    <location>
        <begin position="89"/>
        <end position="111"/>
    </location>
</feature>
<feature type="repeat" description="LRR 4">
    <location>
        <begin position="126"/>
        <end position="149"/>
    </location>
</feature>
<feature type="repeat" description="LRR 5">
    <location>
        <begin position="151"/>
        <end position="170"/>
    </location>
</feature>
<feature type="repeat" description="LRR 6">
    <location>
        <begin position="171"/>
        <end position="195"/>
    </location>
</feature>
<feature type="repeat" description="LRR 7">
    <location>
        <begin position="203"/>
        <end position="226"/>
    </location>
</feature>
<feature type="repeat" description="LRR 8">
    <location>
        <begin position="228"/>
        <end position="247"/>
    </location>
</feature>
<feature type="repeat" description="LRR 9">
    <location>
        <begin position="248"/>
        <end position="273"/>
    </location>
</feature>
<feature type="repeat" description="LRR 10">
    <location>
        <begin position="275"/>
        <end position="289"/>
    </location>
</feature>
<feature type="repeat" description="LRR 11">
    <location>
        <begin position="290"/>
        <end position="312"/>
    </location>
</feature>
<feature type="repeat" description="LRR 12">
    <location>
        <begin position="314"/>
        <end position="337"/>
    </location>
</feature>
<feature type="repeat" description="LRR 13">
    <location>
        <begin position="339"/>
        <end position="364"/>
    </location>
</feature>
<feature type="repeat" description="LRR 14">
    <location>
        <begin position="369"/>
        <end position="392"/>
    </location>
</feature>
<feature type="repeat" description="LRR 15">
    <location>
        <begin position="396"/>
        <end position="419"/>
    </location>
</feature>
<feature type="repeat" description="LRR 16">
    <location>
        <begin position="421"/>
        <end position="443"/>
    </location>
</feature>
<feature type="repeat" description="LRR 17">
    <location>
        <begin position="493"/>
        <end position="516"/>
    </location>
</feature>
<feature type="repeat" description="LRR 18">
    <location>
        <begin position="517"/>
        <end position="542"/>
    </location>
</feature>
<feature type="repeat" description="LRR 19">
    <location>
        <begin position="543"/>
        <end position="565"/>
    </location>
</feature>
<feature type="repeat" description="LRR 20">
    <location>
        <begin position="567"/>
        <end position="589"/>
    </location>
</feature>
<feature type="repeat" description="LRR 21">
    <location>
        <begin position="596"/>
        <end position="619"/>
    </location>
</feature>
<feature type="repeat" description="LRR 22">
    <location>
        <begin position="620"/>
        <end position="645"/>
    </location>
</feature>
<feature type="repeat" description="LRR 23">
    <location>
        <begin position="650"/>
        <end position="673"/>
    </location>
</feature>
<feature type="repeat" description="LRR 24">
    <location>
        <begin position="675"/>
        <end position="698"/>
    </location>
</feature>
<feature type="repeat" description="LRR 25">
    <location>
        <begin position="699"/>
        <end position="722"/>
    </location>
</feature>
<feature type="repeat" description="LRR 26">
    <location>
        <begin position="724"/>
        <end position="746"/>
    </location>
</feature>
<feature type="repeat" description="LRR 27">
    <location>
        <begin position="747"/>
        <end position="770"/>
    </location>
</feature>
<feature type="repeat" description="LRR 28">
    <location>
        <begin position="773"/>
        <end position="796"/>
    </location>
</feature>
<feature type="domain" description="TIR" evidence="3">
    <location>
        <begin position="890"/>
        <end position="1034"/>
    </location>
</feature>
<feature type="glycosylation site" description="N-linked (GlcNAc...) asparagine" evidence="2">
    <location>
        <position position="66"/>
    </location>
</feature>
<feature type="glycosylation site" description="N-linked (GlcNAc...) asparagine" evidence="2">
    <location>
        <position position="69"/>
    </location>
</feature>
<feature type="glycosylation site" description="N-linked (GlcNAc...) asparagine" evidence="2">
    <location>
        <position position="167"/>
    </location>
</feature>
<feature type="glycosylation site" description="N-linked (GlcNAc...) asparagine" evidence="2">
    <location>
        <position position="190"/>
    </location>
</feature>
<feature type="glycosylation site" description="N-linked (GlcNAc...) asparagine" evidence="2">
    <location>
        <position position="215"/>
    </location>
</feature>
<feature type="glycosylation site" description="N-linked (GlcNAc...) asparagine" evidence="2">
    <location>
        <position position="387"/>
    </location>
</feature>
<feature type="glycosylation site" description="N-linked (GlcNAc...) asparagine" evidence="2">
    <location>
        <position position="524"/>
    </location>
</feature>
<feature type="glycosylation site" description="N-linked (GlcNAc...) asparagine" evidence="2">
    <location>
        <position position="535"/>
    </location>
</feature>
<feature type="glycosylation site" description="N-linked (GlcNAc...) asparagine" evidence="2">
    <location>
        <position position="591"/>
    </location>
</feature>
<feature type="glycosylation site" description="N-linked (GlcNAc...) asparagine" evidence="2">
    <location>
        <position position="680"/>
    </location>
</feature>
<feature type="glycosylation site" description="N-linked (GlcNAc...) asparagine" evidence="2">
    <location>
        <position position="721"/>
    </location>
</feature>
<feature type="glycosylation site" description="N-linked (GlcNAc...) asparagine" evidence="2">
    <location>
        <position position="800"/>
    </location>
</feature>
<feature type="mutagenesis site" description="In kika; mice develop autoimmunity with splenomegaly, multiple autoantibodies, and increased total and activated B cells, germinal centers, plasma cells and memory CD4+ T cells." evidence="9">
    <original>Y</original>
    <variation>H</variation>
    <location>
        <position position="264"/>
    </location>
</feature>
<keyword id="KW-0968">Cytoplasmic vesicle</keyword>
<keyword id="KW-0256">Endoplasmic reticulum</keyword>
<keyword id="KW-0967">Endosome</keyword>
<keyword id="KW-0325">Glycoprotein</keyword>
<keyword id="KW-0391">Immunity</keyword>
<keyword id="KW-0395">Inflammatory response</keyword>
<keyword id="KW-0399">Innate immunity</keyword>
<keyword id="KW-0433">Leucine-rich repeat</keyword>
<keyword id="KW-0458">Lysosome</keyword>
<keyword id="KW-0472">Membrane</keyword>
<keyword id="KW-0675">Receptor</keyword>
<keyword id="KW-1185">Reference proteome</keyword>
<keyword id="KW-0677">Repeat</keyword>
<keyword id="KW-0732">Signal</keyword>
<keyword id="KW-0812">Transmembrane</keyword>
<keyword id="KW-1133">Transmembrane helix</keyword>
<reference key="1">
    <citation type="submission" date="2001-05" db="EMBL/GenBank/DDBJ databases">
        <title>Molecular cloning of murine Toll-like receptor 7.</title>
        <authorList>
            <person name="Heil F.J."/>
            <person name="Lipford G.B."/>
            <person name="Wagner H."/>
            <person name="Bauer S.M."/>
        </authorList>
    </citation>
    <scope>NUCLEOTIDE SEQUENCE [MRNA]</scope>
    <source>
        <tissue>Macrophage</tissue>
    </source>
</reference>
<reference key="2">
    <citation type="journal article" date="2004" name="Science">
        <title>Innate antiviral responses by means of TLR7-mediated recognition of single-stranded RNA.</title>
        <authorList>
            <person name="Diebold S.S."/>
            <person name="Kaisho T."/>
            <person name="Hemmi H."/>
            <person name="Akira S."/>
            <person name="Reis e Sousa C."/>
        </authorList>
    </citation>
    <scope>FUNCTION</scope>
</reference>
<reference key="3">
    <citation type="journal article" date="2007" name="J. Cell Biol.">
        <title>The interaction between the ER membrane protein UNC93B and TLR3, 7, and 9 is crucial for TLR signaling.</title>
        <authorList>
            <person name="Brinkmann M.M."/>
            <person name="Spooner E."/>
            <person name="Hoebe K."/>
            <person name="Beutler B."/>
            <person name="Ploegh H.L."/>
            <person name="Kim Y.M."/>
        </authorList>
    </citation>
    <scope>IDENTIFICATION BY MASS SPECTROMETRY</scope>
    <scope>INTERACTION WITH UNC93B1</scope>
</reference>
<reference key="4">
    <citation type="journal article" date="2008" name="Nature">
        <title>UNC93B1 delivers nucleotide-sensing toll-like receptors to endolysosomes.</title>
        <authorList>
            <person name="Kim Y.M."/>
            <person name="Brinkmann M.M."/>
            <person name="Paquet M.E."/>
            <person name="Ploegh H.L."/>
        </authorList>
    </citation>
    <scope>SUBCELLULAR LOCATION</scope>
</reference>
<reference key="5">
    <citation type="journal article" date="2011" name="J. Exp. Med.">
        <title>Nucleic acid recognition by Toll-like receptors is coupled to stepwise processing by cathepsins and asparagine endopeptidase.</title>
        <authorList>
            <person name="Ewald S.E."/>
            <person name="Engel A."/>
            <person name="Lee J."/>
            <person name="Wang M."/>
            <person name="Bogyo M."/>
            <person name="Barton G.M."/>
        </authorList>
    </citation>
    <scope>PROTEOLYTIC CLEAVAGE</scope>
    <scope>FUNCTION</scope>
</reference>
<reference key="6">
    <citation type="journal article" date="2015" name="Cell Rep.">
        <title>The lipid-modifying enzyme SMPDL3B negatively regulates innate immunity.</title>
        <authorList>
            <person name="Heinz L.X."/>
            <person name="Baumann C.L."/>
            <person name="Koeberlin M.S."/>
            <person name="Snijder B."/>
            <person name="Gawish R."/>
            <person name="Shui G."/>
            <person name="Sharif O."/>
            <person name="Aspalter I.M."/>
            <person name="Mueller A.C."/>
            <person name="Kandasamy R.K."/>
            <person name="Breitwieser F.P."/>
            <person name="Pichlmair A."/>
            <person name="Bruckner M."/>
            <person name="Rebsamen M."/>
            <person name="Blueml S."/>
            <person name="Karonitsch T."/>
            <person name="Fauster A."/>
            <person name="Colinge J."/>
            <person name="Bennett K.L."/>
            <person name="Knapp S."/>
            <person name="Wenk M.R."/>
            <person name="Superti-Furga G."/>
        </authorList>
    </citation>
    <scope>INTERACTION WITH SMPDL3B</scope>
</reference>
<reference key="7">
    <citation type="journal article" date="2022" name="Nature">
        <title>TLR7 gain-of-function genetic variation causes human lupus.</title>
        <authorList>
            <person name="Brown G.J."/>
            <person name="Canete P.F."/>
            <person name="Wang H."/>
            <person name="Medhavy A."/>
            <person name="Bones J."/>
            <person name="Roco J.A."/>
            <person name="He Y."/>
            <person name="Qin Y."/>
            <person name="Cappello J."/>
            <person name="Ellyard J.I."/>
            <person name="Bassett K."/>
            <person name="Shen Q."/>
            <person name="Burgio G."/>
            <person name="Zhang Y."/>
            <person name="Turnbull C."/>
            <person name="Meng X."/>
            <person name="Wu P."/>
            <person name="Cho E."/>
            <person name="Miosge L.A."/>
            <person name="Andrews T.D."/>
            <person name="Field M.A."/>
            <person name="Tvorogov D."/>
            <person name="Lopez A.F."/>
            <person name="Babon J.J."/>
            <person name="Lopez C.A."/>
            <person name="Gonzalez-Murillo A."/>
            <person name="Garulo D.C."/>
            <person name="Pascual V."/>
            <person name="Levy T."/>
            <person name="Mallack E.J."/>
            <person name="Calame D.G."/>
            <person name="Lotze T."/>
            <person name="Lupski J.R."/>
            <person name="Ding H."/>
            <person name="Ullah T.R."/>
            <person name="Walters G.D."/>
            <person name="Koina M.E."/>
            <person name="Cook M.C."/>
            <person name="Shen N."/>
            <person name="de Lucas Collantes C."/>
            <person name="Corry B."/>
            <person name="Gantier M.P."/>
            <person name="Athanasopoulos V."/>
            <person name="Vinuesa C.G."/>
        </authorList>
    </citation>
    <scope>MUTAGENESIS OF TYR-264</scope>
</reference>
<dbReference type="EMBL" id="AY035889">
    <property type="protein sequence ID" value="AAK62676.1"/>
    <property type="molecule type" value="mRNA"/>
</dbReference>
<dbReference type="CCDS" id="CCDS30531.1"/>
<dbReference type="CCDS" id="CCDS72469.1"/>
<dbReference type="RefSeq" id="NP_001277684.1">
    <property type="nucleotide sequence ID" value="NM_001290755.1"/>
</dbReference>
<dbReference type="RefSeq" id="NP_001277685.1">
    <property type="nucleotide sequence ID" value="NM_001290756.1"/>
</dbReference>
<dbReference type="RefSeq" id="NP_001277686.1">
    <property type="nucleotide sequence ID" value="NM_001290757.1"/>
</dbReference>
<dbReference type="RefSeq" id="NP_573474.1">
    <property type="nucleotide sequence ID" value="NM_133211.4"/>
</dbReference>
<dbReference type="RefSeq" id="XP_011246087.1">
    <property type="nucleotide sequence ID" value="XM_011247785.1"/>
</dbReference>
<dbReference type="RefSeq" id="XP_011246088.1">
    <property type="nucleotide sequence ID" value="XM_011247786.1"/>
</dbReference>
<dbReference type="SMR" id="P58681"/>
<dbReference type="BioGRID" id="228409">
    <property type="interactions" value="3"/>
</dbReference>
<dbReference type="CORUM" id="P58681"/>
<dbReference type="FunCoup" id="P58681">
    <property type="interactions" value="143"/>
</dbReference>
<dbReference type="IntAct" id="P58681">
    <property type="interactions" value="2"/>
</dbReference>
<dbReference type="STRING" id="10090.ENSMUSP00000107787"/>
<dbReference type="BindingDB" id="P58681"/>
<dbReference type="ChEMBL" id="CHEMBL6085"/>
<dbReference type="GuidetoPHARMACOLOGY" id="1757"/>
<dbReference type="GlyCosmos" id="P58681">
    <property type="glycosylation" value="12 sites, No reported glycans"/>
</dbReference>
<dbReference type="GlyGen" id="P58681">
    <property type="glycosylation" value="12 sites, 1 N-linked glycan (2 sites)"/>
</dbReference>
<dbReference type="iPTMnet" id="P58681"/>
<dbReference type="PhosphoSitePlus" id="P58681"/>
<dbReference type="SwissPalm" id="P58681"/>
<dbReference type="jPOST" id="P58681"/>
<dbReference type="PaxDb" id="10090-ENSMUSP00000061853"/>
<dbReference type="PeptideAtlas" id="P58681"/>
<dbReference type="ProteomicsDB" id="259516"/>
<dbReference type="Antibodypedia" id="8500">
    <property type="antibodies" value="1022 antibodies from 45 providers"/>
</dbReference>
<dbReference type="DNASU" id="170743"/>
<dbReference type="Ensembl" id="ENSMUST00000060719.12">
    <property type="protein sequence ID" value="ENSMUSP00000061853.6"/>
    <property type="gene ID" value="ENSMUSG00000044583.14"/>
</dbReference>
<dbReference type="Ensembl" id="ENSMUST00000112161.8">
    <property type="protein sequence ID" value="ENSMUSP00000107787.2"/>
    <property type="gene ID" value="ENSMUSG00000044583.14"/>
</dbReference>
<dbReference type="Ensembl" id="ENSMUST00000112164.2">
    <property type="protein sequence ID" value="ENSMUSP00000107789.2"/>
    <property type="gene ID" value="ENSMUSG00000044583.14"/>
</dbReference>
<dbReference type="GeneID" id="170743"/>
<dbReference type="KEGG" id="mmu:170743"/>
<dbReference type="UCSC" id="uc009uwz.2">
    <property type="organism name" value="mouse"/>
</dbReference>
<dbReference type="AGR" id="MGI:2176882"/>
<dbReference type="CTD" id="51284"/>
<dbReference type="MGI" id="MGI:2176882">
    <property type="gene designation" value="Tlr7"/>
</dbReference>
<dbReference type="VEuPathDB" id="HostDB:ENSMUSG00000044583"/>
<dbReference type="eggNOG" id="KOG4641">
    <property type="taxonomic scope" value="Eukaryota"/>
</dbReference>
<dbReference type="GeneTree" id="ENSGT00940000159771"/>
<dbReference type="HOGENOM" id="CLU_006000_2_0_1"/>
<dbReference type="InParanoid" id="P58681"/>
<dbReference type="OMA" id="CNSKYLR"/>
<dbReference type="OrthoDB" id="10006997at2759"/>
<dbReference type="PhylomeDB" id="P58681"/>
<dbReference type="TreeFam" id="TF325595"/>
<dbReference type="Reactome" id="R-MMU-1679131">
    <property type="pathway name" value="Trafficking and processing of endosomal TLR"/>
</dbReference>
<dbReference type="Reactome" id="R-MMU-168181">
    <property type="pathway name" value="Toll Like Receptor 7/8 (TLR7/8) Cascade"/>
</dbReference>
<dbReference type="Reactome" id="R-MMU-5686938">
    <property type="pathway name" value="Regulation of TLR by endogenous ligand"/>
</dbReference>
<dbReference type="BioGRID-ORCS" id="170743">
    <property type="hits" value="0 hits in 77 CRISPR screens"/>
</dbReference>
<dbReference type="ChiTaRS" id="Tlr7">
    <property type="organism name" value="mouse"/>
</dbReference>
<dbReference type="PRO" id="PR:P58681"/>
<dbReference type="Proteomes" id="UP000000589">
    <property type="component" value="Chromosome X"/>
</dbReference>
<dbReference type="RNAct" id="P58681">
    <property type="molecule type" value="protein"/>
</dbReference>
<dbReference type="Bgee" id="ENSMUSG00000044583">
    <property type="expression patterns" value="Expressed in stroma of bone marrow and 70 other cell types or tissues"/>
</dbReference>
<dbReference type="ExpressionAtlas" id="P58681">
    <property type="expression patterns" value="baseline and differential"/>
</dbReference>
<dbReference type="GO" id="GO:0032009">
    <property type="term" value="C:early phagosome"/>
    <property type="evidence" value="ECO:0000314"/>
    <property type="project" value="UniProtKB"/>
</dbReference>
<dbReference type="GO" id="GO:0005783">
    <property type="term" value="C:endoplasmic reticulum"/>
    <property type="evidence" value="ECO:0000314"/>
    <property type="project" value="UniProtKB"/>
</dbReference>
<dbReference type="GO" id="GO:0005789">
    <property type="term" value="C:endoplasmic reticulum membrane"/>
    <property type="evidence" value="ECO:0007669"/>
    <property type="project" value="UniProtKB-SubCell"/>
</dbReference>
<dbReference type="GO" id="GO:0005768">
    <property type="term" value="C:endosome"/>
    <property type="evidence" value="ECO:0000314"/>
    <property type="project" value="UniProtKB"/>
</dbReference>
<dbReference type="GO" id="GO:0010008">
    <property type="term" value="C:endosome membrane"/>
    <property type="evidence" value="ECO:0007669"/>
    <property type="project" value="UniProtKB-SubCell"/>
</dbReference>
<dbReference type="GO" id="GO:0005764">
    <property type="term" value="C:lysosome"/>
    <property type="evidence" value="ECO:0000314"/>
    <property type="project" value="UniProtKB"/>
</dbReference>
<dbReference type="GO" id="GO:0005886">
    <property type="term" value="C:plasma membrane"/>
    <property type="evidence" value="ECO:0007669"/>
    <property type="project" value="Ensembl"/>
</dbReference>
<dbReference type="GO" id="GO:0043235">
    <property type="term" value="C:receptor complex"/>
    <property type="evidence" value="ECO:0000266"/>
    <property type="project" value="MGI"/>
</dbReference>
<dbReference type="GO" id="GO:0003725">
    <property type="term" value="F:double-stranded RNA binding"/>
    <property type="evidence" value="ECO:0000250"/>
    <property type="project" value="UniProtKB"/>
</dbReference>
<dbReference type="GO" id="GO:0003727">
    <property type="term" value="F:single-stranded RNA binding"/>
    <property type="evidence" value="ECO:0000315"/>
    <property type="project" value="UniProtKB"/>
</dbReference>
<dbReference type="GO" id="GO:0035197">
    <property type="term" value="F:siRNA binding"/>
    <property type="evidence" value="ECO:0000315"/>
    <property type="project" value="UniProtKB"/>
</dbReference>
<dbReference type="GO" id="GO:0007249">
    <property type="term" value="P:canonical NF-kappaB signal transduction"/>
    <property type="evidence" value="ECO:0000250"/>
    <property type="project" value="UniProtKB"/>
</dbReference>
<dbReference type="GO" id="GO:0071260">
    <property type="term" value="P:cellular response to mechanical stimulus"/>
    <property type="evidence" value="ECO:0007669"/>
    <property type="project" value="Ensembl"/>
</dbReference>
<dbReference type="GO" id="GO:0098586">
    <property type="term" value="P:cellular response to virus"/>
    <property type="evidence" value="ECO:0000315"/>
    <property type="project" value="MGI"/>
</dbReference>
<dbReference type="GO" id="GO:0051607">
    <property type="term" value="P:defense response to virus"/>
    <property type="evidence" value="ECO:0000315"/>
    <property type="project" value="UniProtKB"/>
</dbReference>
<dbReference type="GO" id="GO:0006954">
    <property type="term" value="P:inflammatory response"/>
    <property type="evidence" value="ECO:0007669"/>
    <property type="project" value="UniProtKB-KW"/>
</dbReference>
<dbReference type="GO" id="GO:0045087">
    <property type="term" value="P:innate immune response"/>
    <property type="evidence" value="ECO:0000250"/>
    <property type="project" value="UniProtKB"/>
</dbReference>
<dbReference type="GO" id="GO:0007254">
    <property type="term" value="P:JNK cascade"/>
    <property type="evidence" value="ECO:0000315"/>
    <property type="project" value="MGI"/>
</dbReference>
<dbReference type="GO" id="GO:0000165">
    <property type="term" value="P:MAPK cascade"/>
    <property type="evidence" value="ECO:0000315"/>
    <property type="project" value="MGI"/>
</dbReference>
<dbReference type="GO" id="GO:0043123">
    <property type="term" value="P:positive regulation of canonical NF-kappaB signal transduction"/>
    <property type="evidence" value="ECO:0000314"/>
    <property type="project" value="GO_Central"/>
</dbReference>
<dbReference type="GO" id="GO:0032722">
    <property type="term" value="P:positive regulation of chemokine production"/>
    <property type="evidence" value="ECO:0007669"/>
    <property type="project" value="Ensembl"/>
</dbReference>
<dbReference type="GO" id="GO:0032727">
    <property type="term" value="P:positive regulation of interferon-alpha production"/>
    <property type="evidence" value="ECO:0000315"/>
    <property type="project" value="UniProtKB"/>
</dbReference>
<dbReference type="GO" id="GO:0032728">
    <property type="term" value="P:positive regulation of interferon-beta production"/>
    <property type="evidence" value="ECO:0000250"/>
    <property type="project" value="UniProtKB"/>
</dbReference>
<dbReference type="GO" id="GO:0032755">
    <property type="term" value="P:positive regulation of interleukin-6 production"/>
    <property type="evidence" value="ECO:0000314"/>
    <property type="project" value="MGI"/>
</dbReference>
<dbReference type="GO" id="GO:0032757">
    <property type="term" value="P:positive regulation of interleukin-8 production"/>
    <property type="evidence" value="ECO:0000250"/>
    <property type="project" value="UniProtKB"/>
</dbReference>
<dbReference type="GO" id="GO:0060907">
    <property type="term" value="P:positive regulation of macrophage cytokine production"/>
    <property type="evidence" value="ECO:0000314"/>
    <property type="project" value="MGI"/>
</dbReference>
<dbReference type="GO" id="GO:1901224">
    <property type="term" value="P:positive regulation of non-canonical NF-kappaB signal transduction"/>
    <property type="evidence" value="ECO:0007669"/>
    <property type="project" value="Ensembl"/>
</dbReference>
<dbReference type="GO" id="GO:0045944">
    <property type="term" value="P:positive regulation of transcription by RNA polymerase II"/>
    <property type="evidence" value="ECO:0000316"/>
    <property type="project" value="MGI"/>
</dbReference>
<dbReference type="GO" id="GO:0032729">
    <property type="term" value="P:positive regulation of type II interferon production"/>
    <property type="evidence" value="ECO:0000250"/>
    <property type="project" value="UniProtKB"/>
</dbReference>
<dbReference type="GO" id="GO:0070305">
    <property type="term" value="P:response to cGMP"/>
    <property type="evidence" value="ECO:0000250"/>
    <property type="project" value="UniProtKB"/>
</dbReference>
<dbReference type="GO" id="GO:0034154">
    <property type="term" value="P:toll-like receptor 7 signaling pathway"/>
    <property type="evidence" value="ECO:0000315"/>
    <property type="project" value="UniProtKB"/>
</dbReference>
<dbReference type="GO" id="GO:0034158">
    <property type="term" value="P:toll-like receptor 8 signaling pathway"/>
    <property type="evidence" value="ECO:0000314"/>
    <property type="project" value="GO_Central"/>
</dbReference>
<dbReference type="FunFam" id="3.40.50.10140:FF:000003">
    <property type="entry name" value="Toll-like receptor 7"/>
    <property type="match status" value="1"/>
</dbReference>
<dbReference type="FunFam" id="3.80.10.10:FF:000037">
    <property type="entry name" value="Toll-like receptor 7"/>
    <property type="match status" value="1"/>
</dbReference>
<dbReference type="Gene3D" id="3.80.10.10">
    <property type="entry name" value="Ribonuclease Inhibitor"/>
    <property type="match status" value="1"/>
</dbReference>
<dbReference type="Gene3D" id="3.40.50.10140">
    <property type="entry name" value="Toll/interleukin-1 receptor homology (TIR) domain"/>
    <property type="match status" value="1"/>
</dbReference>
<dbReference type="InterPro" id="IPR000483">
    <property type="entry name" value="Cys-rich_flank_reg_C"/>
</dbReference>
<dbReference type="InterPro" id="IPR001611">
    <property type="entry name" value="Leu-rich_rpt"/>
</dbReference>
<dbReference type="InterPro" id="IPR003591">
    <property type="entry name" value="Leu-rich_rpt_typical-subtyp"/>
</dbReference>
<dbReference type="InterPro" id="IPR041283">
    <property type="entry name" value="LRR_12"/>
</dbReference>
<dbReference type="InterPro" id="IPR032675">
    <property type="entry name" value="LRR_dom_sf"/>
</dbReference>
<dbReference type="InterPro" id="IPR000157">
    <property type="entry name" value="TIR_dom"/>
</dbReference>
<dbReference type="InterPro" id="IPR035897">
    <property type="entry name" value="Toll_tir_struct_dom_sf"/>
</dbReference>
<dbReference type="PANTHER" id="PTHR47410:SF2">
    <property type="entry name" value="TOLL-LIKE RECEPTOR 7"/>
    <property type="match status" value="1"/>
</dbReference>
<dbReference type="PANTHER" id="PTHR47410">
    <property type="entry name" value="TOLL-LIKE RECEPTOR 7-RELATED"/>
    <property type="match status" value="1"/>
</dbReference>
<dbReference type="Pfam" id="PF00560">
    <property type="entry name" value="LRR_1"/>
    <property type="match status" value="1"/>
</dbReference>
<dbReference type="Pfam" id="PF18837">
    <property type="entry name" value="LRR_12"/>
    <property type="match status" value="1"/>
</dbReference>
<dbReference type="Pfam" id="PF13855">
    <property type="entry name" value="LRR_8"/>
    <property type="match status" value="4"/>
</dbReference>
<dbReference type="Pfam" id="PF01582">
    <property type="entry name" value="TIR"/>
    <property type="match status" value="1"/>
</dbReference>
<dbReference type="PRINTS" id="PR00019">
    <property type="entry name" value="LEURICHRPT"/>
</dbReference>
<dbReference type="SMART" id="SM00364">
    <property type="entry name" value="LRR_BAC"/>
    <property type="match status" value="4"/>
</dbReference>
<dbReference type="SMART" id="SM00365">
    <property type="entry name" value="LRR_SD22"/>
    <property type="match status" value="8"/>
</dbReference>
<dbReference type="SMART" id="SM00369">
    <property type="entry name" value="LRR_TYP"/>
    <property type="match status" value="12"/>
</dbReference>
<dbReference type="SMART" id="SM00082">
    <property type="entry name" value="LRRCT"/>
    <property type="match status" value="1"/>
</dbReference>
<dbReference type="SMART" id="SM00255">
    <property type="entry name" value="TIR"/>
    <property type="match status" value="1"/>
</dbReference>
<dbReference type="SUPFAM" id="SSF52058">
    <property type="entry name" value="L domain-like"/>
    <property type="match status" value="1"/>
</dbReference>
<dbReference type="SUPFAM" id="SSF52047">
    <property type="entry name" value="RNI-like"/>
    <property type="match status" value="1"/>
</dbReference>
<dbReference type="SUPFAM" id="SSF52200">
    <property type="entry name" value="Toll/Interleukin receptor TIR domain"/>
    <property type="match status" value="1"/>
</dbReference>
<dbReference type="PROSITE" id="PS51450">
    <property type="entry name" value="LRR"/>
    <property type="match status" value="19"/>
</dbReference>
<dbReference type="PROSITE" id="PS50104">
    <property type="entry name" value="TIR"/>
    <property type="match status" value="1"/>
</dbReference>
<gene>
    <name type="primary">Tlr7</name>
</gene>
<protein>
    <recommendedName>
        <fullName>Toll-like receptor 7</fullName>
    </recommendedName>
</protein>
<accession>P58681</accession>
<accession>Q923I1</accession>
<name>TLR7_MOUSE</name>
<sequence>MVFSMWTRKRQILIFLNMLLVSRVFGFRWFPKTLPCEVKVNIPEAHVIVDCTDKHLTEIPEGIPTNTTNLTLTINHIPSISPDSFRRLNHLEEIDLRCNCVPVLLGSKANVCTKRLQIRPGSFSGLSDLKALYLDGNQLLEIPQDLPSSLHLLSLEANNIFSITKENLTELVNIETLYLGQNCYYRNPCNVSYSIEKDAFLVMRNLKVLSLKDNNVTAVPTTLPPNLLELYLYNNIIKKIQENDFNNLNELQVLDLSGNCPRCYNVPYPCTPCENNSPLQIHDNAFNSLTELKVLRLHSNSLQHVPPTWFKNMRNLQELDLSQNYLAREIEEAKFLHFLPNLVELDFSFNYELQVYHASITLPHSLSSLENLKILRVKGYVFKELKNSSLSVLHKLPRLEVLDLGTNFIKIADLNIFKHFENLKLIDLSVNKISPSEESREVGFCPNAQTSVDRHGPQVLEALHYFRYDEYARSCRFKNKEPPSFLPLNADCHIYGQTLDLSRNNIFFIKPSDFQHLSFLKCLNLSGNTIGQTLNGSELWPLRELRYLDFSNNRLDLLYSTAFEELQSLEVLDLSSNSHYFQAEGITHMLNFTKKLRLLDKLMMNDNDISTSASRTMESDSLRILEFRGNHLDVLWRAGDNRYLDFFKNLFNLEVLDISRNSLNSLPPEVFEGMPPNLKNLSLAKNGLKSFFWDRLQLLKHLEILDLSHNQLTKVPERLANCSKSLTTLILKHNQIRQLTKYFLEDALQLRYLDISSNKIQVIQKTSFPENVLNNLEMLVLHHNRFLCNCDAVWFVWWVNHTDVTIPYLATDVTCVGPGAHKGQSVISLDLYTCELDLTNLILFSVSISSVLFLMVVMTTSHLFFWDMWYIYYFWKAKIKGYQHLQSMESCYDAFIVYDTKNSAVTEWVLQELVAKLEDPREKHFNLCLEERDWLPGQPVLENLSQSIQLSKKTVFVMTQKYAKTESFKMAFYLSHQRLLDEKVDVIILIFLEKPLQKSKFLQLRKRLCRSSVLEWPANPQAHPYFWQCLKNALTTDNHVAYSQMFKETV</sequence>
<organism>
    <name type="scientific">Mus musculus</name>
    <name type="common">Mouse</name>
    <dbReference type="NCBI Taxonomy" id="10090"/>
    <lineage>
        <taxon>Eukaryota</taxon>
        <taxon>Metazoa</taxon>
        <taxon>Chordata</taxon>
        <taxon>Craniata</taxon>
        <taxon>Vertebrata</taxon>
        <taxon>Euteleostomi</taxon>
        <taxon>Mammalia</taxon>
        <taxon>Eutheria</taxon>
        <taxon>Euarchontoglires</taxon>
        <taxon>Glires</taxon>
        <taxon>Rodentia</taxon>
        <taxon>Myomorpha</taxon>
        <taxon>Muroidea</taxon>
        <taxon>Muridae</taxon>
        <taxon>Murinae</taxon>
        <taxon>Mus</taxon>
        <taxon>Mus</taxon>
    </lineage>
</organism>